<gene>
    <name evidence="1" type="primary">psaJ</name>
    <name type="ordered locus">PS143</name>
</gene>
<geneLocation type="chloroplast"/>
<keyword id="KW-0150">Chloroplast</keyword>
<keyword id="KW-0472">Membrane</keyword>
<keyword id="KW-0602">Photosynthesis</keyword>
<keyword id="KW-0603">Photosystem I</keyword>
<keyword id="KW-0934">Plastid</keyword>
<keyword id="KW-0793">Thylakoid</keyword>
<keyword id="KW-0812">Transmembrane</keyword>
<keyword id="KW-1133">Transmembrane helix</keyword>
<accession>Q6L381</accession>
<protein>
    <recommendedName>
        <fullName evidence="1">Photosystem I reaction center subunit IX</fullName>
    </recommendedName>
    <alternativeName>
        <fullName evidence="1">PSI-J</fullName>
    </alternativeName>
</protein>
<name>PSAJ_SACHY</name>
<feature type="chain" id="PRO_0000207814" description="Photosystem I reaction center subunit IX">
    <location>
        <begin position="1"/>
        <end position="42"/>
    </location>
</feature>
<feature type="transmembrane region" description="Helical" evidence="1">
    <location>
        <begin position="7"/>
        <end position="27"/>
    </location>
</feature>
<dbReference type="EMBL" id="AE009947">
    <property type="protein sequence ID" value="AAT44711.1"/>
    <property type="molecule type" value="Genomic_DNA"/>
</dbReference>
<dbReference type="SMR" id="Q6L381"/>
<dbReference type="GO" id="GO:0009535">
    <property type="term" value="C:chloroplast thylakoid membrane"/>
    <property type="evidence" value="ECO:0007669"/>
    <property type="project" value="UniProtKB-SubCell"/>
</dbReference>
<dbReference type="GO" id="GO:0009522">
    <property type="term" value="C:photosystem I"/>
    <property type="evidence" value="ECO:0007669"/>
    <property type="project" value="UniProtKB-KW"/>
</dbReference>
<dbReference type="GO" id="GO:0015979">
    <property type="term" value="P:photosynthesis"/>
    <property type="evidence" value="ECO:0007669"/>
    <property type="project" value="UniProtKB-UniRule"/>
</dbReference>
<dbReference type="FunFam" id="1.20.5.510:FF:000001">
    <property type="entry name" value="Photosystem I reaction center subunit IX"/>
    <property type="match status" value="1"/>
</dbReference>
<dbReference type="Gene3D" id="1.20.5.510">
    <property type="entry name" value="Single helix bin"/>
    <property type="match status" value="1"/>
</dbReference>
<dbReference type="HAMAP" id="MF_00522">
    <property type="entry name" value="PSI_PsaJ"/>
    <property type="match status" value="1"/>
</dbReference>
<dbReference type="InterPro" id="IPR002615">
    <property type="entry name" value="PSI_PsaJ"/>
</dbReference>
<dbReference type="InterPro" id="IPR036062">
    <property type="entry name" value="PSI_PsaJ_sf"/>
</dbReference>
<dbReference type="PANTHER" id="PTHR36082">
    <property type="match status" value="1"/>
</dbReference>
<dbReference type="PANTHER" id="PTHR36082:SF2">
    <property type="entry name" value="PHOTOSYSTEM I REACTION CENTER SUBUNIT IX"/>
    <property type="match status" value="1"/>
</dbReference>
<dbReference type="Pfam" id="PF01701">
    <property type="entry name" value="PSI_PsaJ"/>
    <property type="match status" value="1"/>
</dbReference>
<dbReference type="SUPFAM" id="SSF81544">
    <property type="entry name" value="Subunit IX of photosystem I reaction centre, PsaJ"/>
    <property type="match status" value="1"/>
</dbReference>
<sequence length="42" mass="4745">MRDIKTYLSVAPVLSTLWFGALAGLLIEINRLFPDALSFPFF</sequence>
<organism>
    <name type="scientific">Saccharum hybrid</name>
    <name type="common">Sugarcane</name>
    <dbReference type="NCBI Taxonomy" id="15819"/>
    <lineage>
        <taxon>Eukaryota</taxon>
        <taxon>Viridiplantae</taxon>
        <taxon>Streptophyta</taxon>
        <taxon>Embryophyta</taxon>
        <taxon>Tracheophyta</taxon>
        <taxon>Spermatophyta</taxon>
        <taxon>Magnoliopsida</taxon>
        <taxon>Liliopsida</taxon>
        <taxon>Poales</taxon>
        <taxon>Poaceae</taxon>
        <taxon>PACMAD clade</taxon>
        <taxon>Panicoideae</taxon>
        <taxon>Andropogonodae</taxon>
        <taxon>Andropogoneae</taxon>
        <taxon>Saccharinae</taxon>
        <taxon>Saccharum</taxon>
    </lineage>
</organism>
<proteinExistence type="inferred from homology"/>
<evidence type="ECO:0000255" key="1">
    <source>
        <dbReference type="HAMAP-Rule" id="MF_00522"/>
    </source>
</evidence>
<comment type="function">
    <text evidence="1">May help in the organization of the PsaE and PsaF subunits.</text>
</comment>
<comment type="subcellular location">
    <subcellularLocation>
        <location evidence="1">Plastid</location>
        <location evidence="1">Chloroplast thylakoid membrane</location>
        <topology evidence="1">Single-pass membrane protein</topology>
    </subcellularLocation>
</comment>
<comment type="similarity">
    <text evidence="1">Belongs to the PsaJ family.</text>
</comment>
<reference key="1">
    <citation type="journal article" date="2004" name="Curr. Genet.">
        <title>Structural features and transcript-editing analysis of sugarcane (Saccharum officinarum L.) chloroplast genome.</title>
        <authorList>
            <person name="Calsa T. Jr."/>
            <person name="Carraro D.M."/>
            <person name="Benatti M.R."/>
            <person name="Barbosa A.C."/>
            <person name="Kitajima J.P."/>
            <person name="Carrer H."/>
        </authorList>
    </citation>
    <scope>NUCLEOTIDE SEQUENCE [LARGE SCALE GENOMIC DNA]</scope>
    <source>
        <strain>cv. SP-80-3280</strain>
    </source>
</reference>